<feature type="chain" id="PRO_1000131303" description="ATP-dependent RNA helicase RhlB">
    <location>
        <begin position="1"/>
        <end position="421"/>
    </location>
</feature>
<feature type="domain" description="Helicase ATP-binding" evidence="1">
    <location>
        <begin position="40"/>
        <end position="219"/>
    </location>
</feature>
<feature type="domain" description="Helicase C-terminal" evidence="1">
    <location>
        <begin position="245"/>
        <end position="390"/>
    </location>
</feature>
<feature type="region of interest" description="Disordered" evidence="2">
    <location>
        <begin position="396"/>
        <end position="421"/>
    </location>
</feature>
<feature type="short sequence motif" description="Q motif">
    <location>
        <begin position="9"/>
        <end position="37"/>
    </location>
</feature>
<feature type="short sequence motif" description="DEAD box">
    <location>
        <begin position="165"/>
        <end position="168"/>
    </location>
</feature>
<feature type="compositionally biased region" description="Low complexity" evidence="2">
    <location>
        <begin position="402"/>
        <end position="414"/>
    </location>
</feature>
<feature type="binding site" evidence="1">
    <location>
        <begin position="53"/>
        <end position="60"/>
    </location>
    <ligand>
        <name>ATP</name>
        <dbReference type="ChEBI" id="CHEBI:30616"/>
    </ligand>
</feature>
<keyword id="KW-0067">ATP-binding</keyword>
<keyword id="KW-0963">Cytoplasm</keyword>
<keyword id="KW-0347">Helicase</keyword>
<keyword id="KW-0378">Hydrolase</keyword>
<keyword id="KW-0547">Nucleotide-binding</keyword>
<keyword id="KW-0694">RNA-binding</keyword>
<reference key="1">
    <citation type="journal article" date="2008" name="Genome Res.">
        <title>Comparative genome analysis of Salmonella enteritidis PT4 and Salmonella gallinarum 287/91 provides insights into evolutionary and host adaptation pathways.</title>
        <authorList>
            <person name="Thomson N.R."/>
            <person name="Clayton D.J."/>
            <person name="Windhorst D."/>
            <person name="Vernikos G."/>
            <person name="Davidson S."/>
            <person name="Churcher C."/>
            <person name="Quail M.A."/>
            <person name="Stevens M."/>
            <person name="Jones M.A."/>
            <person name="Watson M."/>
            <person name="Barron A."/>
            <person name="Layton A."/>
            <person name="Pickard D."/>
            <person name="Kingsley R.A."/>
            <person name="Bignell A."/>
            <person name="Clark L."/>
            <person name="Harris B."/>
            <person name="Ormond D."/>
            <person name="Abdellah Z."/>
            <person name="Brooks K."/>
            <person name="Cherevach I."/>
            <person name="Chillingworth T."/>
            <person name="Woodward J."/>
            <person name="Norberczak H."/>
            <person name="Lord A."/>
            <person name="Arrowsmith C."/>
            <person name="Jagels K."/>
            <person name="Moule S."/>
            <person name="Mungall K."/>
            <person name="Saunders M."/>
            <person name="Whitehead S."/>
            <person name="Chabalgoity J.A."/>
            <person name="Maskell D."/>
            <person name="Humphreys T."/>
            <person name="Roberts M."/>
            <person name="Barrow P.A."/>
            <person name="Dougan G."/>
            <person name="Parkhill J."/>
        </authorList>
    </citation>
    <scope>NUCLEOTIDE SEQUENCE [LARGE SCALE GENOMIC DNA]</scope>
    <source>
        <strain>287/91 / NCTC 13346</strain>
    </source>
</reference>
<protein>
    <recommendedName>
        <fullName evidence="1">ATP-dependent RNA helicase RhlB</fullName>
        <ecNumber evidence="1">3.6.4.13</ecNumber>
    </recommendedName>
</protein>
<dbReference type="EC" id="3.6.4.13" evidence="1"/>
<dbReference type="EMBL" id="AM933173">
    <property type="protein sequence ID" value="CAR39317.1"/>
    <property type="molecule type" value="Genomic_DNA"/>
</dbReference>
<dbReference type="RefSeq" id="WP_000047525.1">
    <property type="nucleotide sequence ID" value="NC_011274.1"/>
</dbReference>
<dbReference type="SMR" id="B5RFS3"/>
<dbReference type="KEGG" id="seg:SG3528"/>
<dbReference type="HOGENOM" id="CLU_003041_1_3_6"/>
<dbReference type="Proteomes" id="UP000008321">
    <property type="component" value="Chromosome"/>
</dbReference>
<dbReference type="GO" id="GO:0005829">
    <property type="term" value="C:cytosol"/>
    <property type="evidence" value="ECO:0007669"/>
    <property type="project" value="TreeGrafter"/>
</dbReference>
<dbReference type="GO" id="GO:0005524">
    <property type="term" value="F:ATP binding"/>
    <property type="evidence" value="ECO:0007669"/>
    <property type="project" value="UniProtKB-UniRule"/>
</dbReference>
<dbReference type="GO" id="GO:0016887">
    <property type="term" value="F:ATP hydrolysis activity"/>
    <property type="evidence" value="ECO:0007669"/>
    <property type="project" value="RHEA"/>
</dbReference>
<dbReference type="GO" id="GO:0003723">
    <property type="term" value="F:RNA binding"/>
    <property type="evidence" value="ECO:0007669"/>
    <property type="project" value="UniProtKB-UniRule"/>
</dbReference>
<dbReference type="GO" id="GO:0003724">
    <property type="term" value="F:RNA helicase activity"/>
    <property type="evidence" value="ECO:0007669"/>
    <property type="project" value="UniProtKB-UniRule"/>
</dbReference>
<dbReference type="GO" id="GO:0006401">
    <property type="term" value="P:RNA catabolic process"/>
    <property type="evidence" value="ECO:0007669"/>
    <property type="project" value="UniProtKB-UniRule"/>
</dbReference>
<dbReference type="CDD" id="cd00268">
    <property type="entry name" value="DEADc"/>
    <property type="match status" value="1"/>
</dbReference>
<dbReference type="CDD" id="cd18787">
    <property type="entry name" value="SF2_C_DEAD"/>
    <property type="match status" value="1"/>
</dbReference>
<dbReference type="FunFam" id="3.40.50.300:FF:000008">
    <property type="entry name" value="ATP-dependent RNA helicase RhlB"/>
    <property type="match status" value="1"/>
</dbReference>
<dbReference type="FunFam" id="3.40.50.300:FF:000312">
    <property type="entry name" value="ATP-dependent RNA helicase RhlB"/>
    <property type="match status" value="1"/>
</dbReference>
<dbReference type="Gene3D" id="3.40.50.300">
    <property type="entry name" value="P-loop containing nucleotide triphosphate hydrolases"/>
    <property type="match status" value="2"/>
</dbReference>
<dbReference type="HAMAP" id="MF_00661">
    <property type="entry name" value="DEAD_helicase_RhlB"/>
    <property type="match status" value="1"/>
</dbReference>
<dbReference type="InterPro" id="IPR011545">
    <property type="entry name" value="DEAD/DEAH_box_helicase_dom"/>
</dbReference>
<dbReference type="InterPro" id="IPR050079">
    <property type="entry name" value="DEAD_box_RNA_helicase"/>
</dbReference>
<dbReference type="InterPro" id="IPR014001">
    <property type="entry name" value="Helicase_ATP-bd"/>
</dbReference>
<dbReference type="InterPro" id="IPR001650">
    <property type="entry name" value="Helicase_C-like"/>
</dbReference>
<dbReference type="InterPro" id="IPR027417">
    <property type="entry name" value="P-loop_NTPase"/>
</dbReference>
<dbReference type="InterPro" id="IPR000629">
    <property type="entry name" value="RNA-helicase_DEAD-box_CS"/>
</dbReference>
<dbReference type="InterPro" id="IPR023554">
    <property type="entry name" value="RNA_helicase_ATP-dep_RhlB"/>
</dbReference>
<dbReference type="InterPro" id="IPR014014">
    <property type="entry name" value="RNA_helicase_DEAD_Q_motif"/>
</dbReference>
<dbReference type="NCBIfam" id="NF003419">
    <property type="entry name" value="PRK04837.1"/>
    <property type="match status" value="1"/>
</dbReference>
<dbReference type="PANTHER" id="PTHR47959:SF10">
    <property type="entry name" value="ATP-DEPENDENT RNA HELICASE RHLB"/>
    <property type="match status" value="1"/>
</dbReference>
<dbReference type="PANTHER" id="PTHR47959">
    <property type="entry name" value="ATP-DEPENDENT RNA HELICASE RHLE-RELATED"/>
    <property type="match status" value="1"/>
</dbReference>
<dbReference type="Pfam" id="PF00270">
    <property type="entry name" value="DEAD"/>
    <property type="match status" value="1"/>
</dbReference>
<dbReference type="Pfam" id="PF00271">
    <property type="entry name" value="Helicase_C"/>
    <property type="match status" value="1"/>
</dbReference>
<dbReference type="SMART" id="SM00487">
    <property type="entry name" value="DEXDc"/>
    <property type="match status" value="1"/>
</dbReference>
<dbReference type="SMART" id="SM00490">
    <property type="entry name" value="HELICc"/>
    <property type="match status" value="1"/>
</dbReference>
<dbReference type="SUPFAM" id="SSF52540">
    <property type="entry name" value="P-loop containing nucleoside triphosphate hydrolases"/>
    <property type="match status" value="1"/>
</dbReference>
<dbReference type="PROSITE" id="PS00039">
    <property type="entry name" value="DEAD_ATP_HELICASE"/>
    <property type="match status" value="1"/>
</dbReference>
<dbReference type="PROSITE" id="PS51192">
    <property type="entry name" value="HELICASE_ATP_BIND_1"/>
    <property type="match status" value="1"/>
</dbReference>
<dbReference type="PROSITE" id="PS51194">
    <property type="entry name" value="HELICASE_CTER"/>
    <property type="match status" value="1"/>
</dbReference>
<dbReference type="PROSITE" id="PS51195">
    <property type="entry name" value="Q_MOTIF"/>
    <property type="match status" value="1"/>
</dbReference>
<evidence type="ECO:0000255" key="1">
    <source>
        <dbReference type="HAMAP-Rule" id="MF_00661"/>
    </source>
</evidence>
<evidence type="ECO:0000256" key="2">
    <source>
        <dbReference type="SAM" id="MobiDB-lite"/>
    </source>
</evidence>
<name>RHLB_SALG2</name>
<sequence length="421" mass="47093">MSKTHLTEQKFSDFALHPQVVEALEKKGFYNCTPIQALALPLTLAGRDVAGQAQTGTGKTMAFLTSTFHYLLSHPAIDDRKVNQPRALIMAPTRELAVQIHADAEPLAQATGLKLGLAYGGDGYDKQLKVLESGVDILIGTTGRLIDYAKQNHINLGAIQVVVLDEADRMYDLGFIKDIRWLFRRMPPAAQRLNMLFSATLSYRVRELAFEQMNNAEYVEVEPEQKTGHRIKEELFYPSNEEKMRLLQTLIEEEWPDRAIIFANTKHRCEDIWGHLAADGHRVGLLTGDVAQKKRLRILDEFTRGDLDILVATDVAARGLHIPAVTHVFNYDLPDDCEDYVHRIGRTGRAGASGHSISLACEEYALNLPAIESYIGHSIPVSKYNPEALMNDLPKPLRLTRSRPGNGPRRAGAPRNRRRSG</sequence>
<proteinExistence type="inferred from homology"/>
<accession>B5RFS3</accession>
<organism>
    <name type="scientific">Salmonella gallinarum (strain 287/91 / NCTC 13346)</name>
    <dbReference type="NCBI Taxonomy" id="550538"/>
    <lineage>
        <taxon>Bacteria</taxon>
        <taxon>Pseudomonadati</taxon>
        <taxon>Pseudomonadota</taxon>
        <taxon>Gammaproteobacteria</taxon>
        <taxon>Enterobacterales</taxon>
        <taxon>Enterobacteriaceae</taxon>
        <taxon>Salmonella</taxon>
    </lineage>
</organism>
<comment type="function">
    <text evidence="1">DEAD-box RNA helicase involved in RNA degradation. Has RNA-dependent ATPase activity and unwinds double-stranded RNA.</text>
</comment>
<comment type="catalytic activity">
    <reaction evidence="1">
        <text>ATP + H2O = ADP + phosphate + H(+)</text>
        <dbReference type="Rhea" id="RHEA:13065"/>
        <dbReference type="ChEBI" id="CHEBI:15377"/>
        <dbReference type="ChEBI" id="CHEBI:15378"/>
        <dbReference type="ChEBI" id="CHEBI:30616"/>
        <dbReference type="ChEBI" id="CHEBI:43474"/>
        <dbReference type="ChEBI" id="CHEBI:456216"/>
        <dbReference type="EC" id="3.6.4.13"/>
    </reaction>
</comment>
<comment type="subunit">
    <text evidence="1">Component of the RNA degradosome, which is a multiprotein complex involved in RNA processing and mRNA degradation.</text>
</comment>
<comment type="subcellular location">
    <subcellularLocation>
        <location evidence="1">Cytoplasm</location>
    </subcellularLocation>
</comment>
<comment type="similarity">
    <text evidence="1">Belongs to the DEAD box helicase family. RhlB subfamily.</text>
</comment>
<gene>
    <name evidence="1" type="primary">rhlB</name>
    <name type="ordered locus">SG3528</name>
</gene>